<accession>B7M841</accession>
<gene>
    <name evidence="1" type="primary">ihfB</name>
    <name evidence="1" type="synonym">himD</name>
    <name type="ordered locus">ECIAI1_0953</name>
</gene>
<protein>
    <recommendedName>
        <fullName evidence="1">Integration host factor subunit beta</fullName>
        <shortName evidence="1">IHF-beta</shortName>
    </recommendedName>
</protein>
<keyword id="KW-0233">DNA recombination</keyword>
<keyword id="KW-0238">DNA-binding</keyword>
<keyword id="KW-0804">Transcription</keyword>
<keyword id="KW-0805">Transcription regulation</keyword>
<keyword id="KW-0810">Translation regulation</keyword>
<organism>
    <name type="scientific">Escherichia coli O8 (strain IAI1)</name>
    <dbReference type="NCBI Taxonomy" id="585034"/>
    <lineage>
        <taxon>Bacteria</taxon>
        <taxon>Pseudomonadati</taxon>
        <taxon>Pseudomonadota</taxon>
        <taxon>Gammaproteobacteria</taxon>
        <taxon>Enterobacterales</taxon>
        <taxon>Enterobacteriaceae</taxon>
        <taxon>Escherichia</taxon>
    </lineage>
</organism>
<comment type="function">
    <text evidence="1">This protein is one of the two subunits of integration host factor, a specific DNA-binding protein that functions in genetic recombination as well as in transcriptional and translational control.</text>
</comment>
<comment type="subunit">
    <text evidence="1">Heterodimer of an alpha and a beta chain.</text>
</comment>
<comment type="similarity">
    <text evidence="1">Belongs to the bacterial histone-like protein family.</text>
</comment>
<reference key="1">
    <citation type="journal article" date="2009" name="PLoS Genet.">
        <title>Organised genome dynamics in the Escherichia coli species results in highly diverse adaptive paths.</title>
        <authorList>
            <person name="Touchon M."/>
            <person name="Hoede C."/>
            <person name="Tenaillon O."/>
            <person name="Barbe V."/>
            <person name="Baeriswyl S."/>
            <person name="Bidet P."/>
            <person name="Bingen E."/>
            <person name="Bonacorsi S."/>
            <person name="Bouchier C."/>
            <person name="Bouvet O."/>
            <person name="Calteau A."/>
            <person name="Chiapello H."/>
            <person name="Clermont O."/>
            <person name="Cruveiller S."/>
            <person name="Danchin A."/>
            <person name="Diard M."/>
            <person name="Dossat C."/>
            <person name="Karoui M.E."/>
            <person name="Frapy E."/>
            <person name="Garry L."/>
            <person name="Ghigo J.M."/>
            <person name="Gilles A.M."/>
            <person name="Johnson J."/>
            <person name="Le Bouguenec C."/>
            <person name="Lescat M."/>
            <person name="Mangenot S."/>
            <person name="Martinez-Jehanne V."/>
            <person name="Matic I."/>
            <person name="Nassif X."/>
            <person name="Oztas S."/>
            <person name="Petit M.A."/>
            <person name="Pichon C."/>
            <person name="Rouy Z."/>
            <person name="Ruf C.S."/>
            <person name="Schneider D."/>
            <person name="Tourret J."/>
            <person name="Vacherie B."/>
            <person name="Vallenet D."/>
            <person name="Medigue C."/>
            <person name="Rocha E.P.C."/>
            <person name="Denamur E."/>
        </authorList>
    </citation>
    <scope>NUCLEOTIDE SEQUENCE [LARGE SCALE GENOMIC DNA]</scope>
    <source>
        <strain>IAI1</strain>
    </source>
</reference>
<dbReference type="EMBL" id="CU928160">
    <property type="protein sequence ID" value="CAQ97817.1"/>
    <property type="molecule type" value="Genomic_DNA"/>
</dbReference>
<dbReference type="RefSeq" id="WP_000167336.1">
    <property type="nucleotide sequence ID" value="NC_011741.1"/>
</dbReference>
<dbReference type="SMR" id="B7M841"/>
<dbReference type="GeneID" id="93776505"/>
<dbReference type="KEGG" id="ecr:ECIAI1_0953"/>
<dbReference type="HOGENOM" id="CLU_105066_2_0_6"/>
<dbReference type="GO" id="GO:0005694">
    <property type="term" value="C:chromosome"/>
    <property type="evidence" value="ECO:0007669"/>
    <property type="project" value="InterPro"/>
</dbReference>
<dbReference type="GO" id="GO:0005829">
    <property type="term" value="C:cytosol"/>
    <property type="evidence" value="ECO:0007669"/>
    <property type="project" value="TreeGrafter"/>
</dbReference>
<dbReference type="GO" id="GO:0003677">
    <property type="term" value="F:DNA binding"/>
    <property type="evidence" value="ECO:0007669"/>
    <property type="project" value="UniProtKB-UniRule"/>
</dbReference>
<dbReference type="GO" id="GO:0030527">
    <property type="term" value="F:structural constituent of chromatin"/>
    <property type="evidence" value="ECO:0007669"/>
    <property type="project" value="InterPro"/>
</dbReference>
<dbReference type="GO" id="GO:0006310">
    <property type="term" value="P:DNA recombination"/>
    <property type="evidence" value="ECO:0007669"/>
    <property type="project" value="UniProtKB-UniRule"/>
</dbReference>
<dbReference type="GO" id="GO:0006355">
    <property type="term" value="P:regulation of DNA-templated transcription"/>
    <property type="evidence" value="ECO:0007669"/>
    <property type="project" value="UniProtKB-UniRule"/>
</dbReference>
<dbReference type="GO" id="GO:0006417">
    <property type="term" value="P:regulation of translation"/>
    <property type="evidence" value="ECO:0007669"/>
    <property type="project" value="UniProtKB-UniRule"/>
</dbReference>
<dbReference type="CDD" id="cd13836">
    <property type="entry name" value="IHF_B"/>
    <property type="match status" value="1"/>
</dbReference>
<dbReference type="FunFam" id="4.10.520.10:FF:000003">
    <property type="entry name" value="Integration host factor subunit beta"/>
    <property type="match status" value="1"/>
</dbReference>
<dbReference type="Gene3D" id="4.10.520.10">
    <property type="entry name" value="IHF-like DNA-binding proteins"/>
    <property type="match status" value="1"/>
</dbReference>
<dbReference type="HAMAP" id="MF_00381">
    <property type="entry name" value="IHF_beta"/>
    <property type="match status" value="1"/>
</dbReference>
<dbReference type="InterPro" id="IPR000119">
    <property type="entry name" value="Hist_DNA-bd"/>
</dbReference>
<dbReference type="InterPro" id="IPR020816">
    <property type="entry name" value="Histone-like_DNA-bd_CS"/>
</dbReference>
<dbReference type="InterPro" id="IPR010992">
    <property type="entry name" value="IHF-like_DNA-bd_dom_sf"/>
</dbReference>
<dbReference type="InterPro" id="IPR005685">
    <property type="entry name" value="IHF_beta"/>
</dbReference>
<dbReference type="NCBIfam" id="TIGR00988">
    <property type="entry name" value="hip"/>
    <property type="match status" value="1"/>
</dbReference>
<dbReference type="NCBIfam" id="NF001222">
    <property type="entry name" value="PRK00199.1"/>
    <property type="match status" value="1"/>
</dbReference>
<dbReference type="PANTHER" id="PTHR33175">
    <property type="entry name" value="DNA-BINDING PROTEIN HU"/>
    <property type="match status" value="1"/>
</dbReference>
<dbReference type="PANTHER" id="PTHR33175:SF5">
    <property type="entry name" value="INTEGRATION HOST FACTOR SUBUNIT BETA"/>
    <property type="match status" value="1"/>
</dbReference>
<dbReference type="Pfam" id="PF00216">
    <property type="entry name" value="Bac_DNA_binding"/>
    <property type="match status" value="1"/>
</dbReference>
<dbReference type="PRINTS" id="PR01727">
    <property type="entry name" value="DNABINDINGHU"/>
</dbReference>
<dbReference type="SMART" id="SM00411">
    <property type="entry name" value="BHL"/>
    <property type="match status" value="1"/>
</dbReference>
<dbReference type="SUPFAM" id="SSF47729">
    <property type="entry name" value="IHF-like DNA-binding proteins"/>
    <property type="match status" value="1"/>
</dbReference>
<dbReference type="PROSITE" id="PS00045">
    <property type="entry name" value="HISTONE_LIKE"/>
    <property type="match status" value="1"/>
</dbReference>
<evidence type="ECO:0000255" key="1">
    <source>
        <dbReference type="HAMAP-Rule" id="MF_00381"/>
    </source>
</evidence>
<proteinExistence type="inferred from homology"/>
<name>IHFB_ECO8A</name>
<feature type="chain" id="PRO_1000122212" description="Integration host factor subunit beta">
    <location>
        <begin position="1"/>
        <end position="94"/>
    </location>
</feature>
<sequence>MTKSELIERLATQQSHIPAKTVEDAVKEMLEHMASTLAQGERIEIRGFGSFSLHYRAPRTGRNPKTGDKVELEGKYVPHFKPGKELRDRANIYG</sequence>